<sequence length="159" mass="18083">MFIFNSIADDIFPLISCVGAIHCNILAIRTGNDFAAIKLQVIKLIYLMIWHSLVIISPVVTLAFFPASLKQGSLHFLLIIYFVLLLTPWLEFSKSGTHLPSNTKIIPAWWVSMDAYLNHASICCHQFSCLSAVKLQLSNEELIRDTRWDIQSYTTDFSF</sequence>
<gene>
    <name type="primary">XKRY</name>
    <name type="synonym">XKRY1</name>
</gene>
<accession>O14609</accession>
<reference key="1">
    <citation type="journal article" date="1997" name="Science">
        <title>Functional coherence of the human Y chromosome.</title>
        <authorList>
            <person name="Lahn B.T."/>
            <person name="Page D.C."/>
        </authorList>
    </citation>
    <scope>NUCLEOTIDE SEQUENCE [MRNA]</scope>
</reference>
<evidence type="ECO:0000255" key="1"/>
<evidence type="ECO:0000305" key="2"/>
<proteinExistence type="evidence at transcript level"/>
<organism>
    <name type="scientific">Homo sapiens</name>
    <name type="common">Human</name>
    <dbReference type="NCBI Taxonomy" id="9606"/>
    <lineage>
        <taxon>Eukaryota</taxon>
        <taxon>Metazoa</taxon>
        <taxon>Chordata</taxon>
        <taxon>Craniata</taxon>
        <taxon>Vertebrata</taxon>
        <taxon>Euteleostomi</taxon>
        <taxon>Mammalia</taxon>
        <taxon>Eutheria</taxon>
        <taxon>Euarchontoglires</taxon>
        <taxon>Primates</taxon>
        <taxon>Haplorrhini</taxon>
        <taxon>Catarrhini</taxon>
        <taxon>Hominidae</taxon>
        <taxon>Homo</taxon>
    </lineage>
</organism>
<feature type="chain" id="PRO_0000190771" description="Testis-specific XK-related protein, Y-linked">
    <location>
        <begin position="1"/>
        <end position="159"/>
    </location>
</feature>
<feature type="transmembrane region" description="Helical" evidence="1">
    <location>
        <begin position="1"/>
        <end position="21"/>
    </location>
</feature>
<feature type="transmembrane region" description="Helical" evidence="1">
    <location>
        <begin position="45"/>
        <end position="65"/>
    </location>
</feature>
<feature type="transmembrane region" description="Helical" evidence="1">
    <location>
        <begin position="72"/>
        <end position="92"/>
    </location>
</feature>
<dbReference type="EMBL" id="AF000997">
    <property type="protein sequence ID" value="AAC51844.1"/>
    <property type="molecule type" value="mRNA"/>
</dbReference>
<dbReference type="RefSeq" id="NP_004668.2">
    <property type="nucleotide sequence ID" value="NM_004677.2"/>
</dbReference>
<dbReference type="BioGRID" id="114538">
    <property type="interactions" value="1"/>
</dbReference>
<dbReference type="BioMuta" id="HGNC:18571"/>
<dbReference type="DNASU" id="9082"/>
<dbReference type="AGR" id="HGNC:18571"/>
<dbReference type="GeneCards" id="XKRY"/>
<dbReference type="GeneReviews" id="XKRY"/>
<dbReference type="HGNC" id="HGNC:18571">
    <property type="gene designation" value="XKRY"/>
</dbReference>
<dbReference type="MIM" id="400015">
    <property type="type" value="gene"/>
</dbReference>
<dbReference type="neXtProt" id="NX_O14609"/>
<dbReference type="PharmGKB" id="PA38583"/>
<dbReference type="InParanoid" id="O14609"/>
<dbReference type="PAN-GO" id="O14609">
    <property type="GO annotations" value="0 GO annotations based on evolutionary models"/>
</dbReference>
<dbReference type="PhylomeDB" id="O14609"/>
<dbReference type="PathwayCommons" id="O14609"/>
<dbReference type="SignaLink" id="O14609"/>
<dbReference type="BioGRID-ORCS" id="9082">
    <property type="hits" value="11 hits in 205 CRISPR screens"/>
</dbReference>
<dbReference type="GenomeRNAi" id="9082"/>
<dbReference type="Pharos" id="O14609">
    <property type="development level" value="Tdark"/>
</dbReference>
<dbReference type="PRO" id="PR:O14609"/>
<dbReference type="Proteomes" id="UP000005640">
    <property type="component" value="Unplaced"/>
</dbReference>
<dbReference type="RNAct" id="O14609">
    <property type="molecule type" value="protein"/>
</dbReference>
<dbReference type="GO" id="GO:0016020">
    <property type="term" value="C:membrane"/>
    <property type="evidence" value="ECO:0007669"/>
    <property type="project" value="UniProtKB-SubCell"/>
</dbReference>
<dbReference type="GO" id="GO:0007338">
    <property type="term" value="P:single fertilization"/>
    <property type="evidence" value="ECO:0000304"/>
    <property type="project" value="ProtInc"/>
</dbReference>
<dbReference type="InterPro" id="IPR051773">
    <property type="entry name" value="XK-related_adapter"/>
</dbReference>
<dbReference type="PANTHER" id="PTHR14297">
    <property type="entry name" value="MEMBRANE TRANSPORT PROTEIN XK FAMILY MEMBER"/>
    <property type="match status" value="1"/>
</dbReference>
<dbReference type="PANTHER" id="PTHR14297:SF9">
    <property type="entry name" value="XK-RELATED PROTEIN 3"/>
    <property type="match status" value="1"/>
</dbReference>
<name>XKRY_HUMAN</name>
<protein>
    <recommendedName>
        <fullName>Testis-specific XK-related protein, Y-linked</fullName>
    </recommendedName>
</protein>
<comment type="subcellular location">
    <subcellularLocation>
        <location evidence="2">Membrane</location>
        <topology evidence="2">Multi-pass membrane protein</topology>
    </subcellularLocation>
</comment>
<comment type="tissue specificity">
    <text>Testis specific.</text>
</comment>
<comment type="similarity">
    <text evidence="2">Belongs to the XK family.</text>
</comment>
<keyword id="KW-0472">Membrane</keyword>
<keyword id="KW-1185">Reference proteome</keyword>
<keyword id="KW-0812">Transmembrane</keyword>
<keyword id="KW-1133">Transmembrane helix</keyword>